<keyword id="KW-0285">Flavoprotein</keyword>
<keyword id="KW-0288">FMN</keyword>
<keyword id="KW-0560">Oxidoreductase</keyword>
<keyword id="KW-0664">Pyridoxine biosynthesis</keyword>
<keyword id="KW-1185">Reference proteome</keyword>
<proteinExistence type="inferred from homology"/>
<gene>
    <name evidence="1" type="primary">pdxH</name>
    <name type="ordered locus">Asuc_0247</name>
</gene>
<feature type="chain" id="PRO_0000335778" description="Pyridoxine/pyridoxamine 5'-phosphate oxidase">
    <location>
        <begin position="1"/>
        <end position="210"/>
    </location>
</feature>
<feature type="binding site" evidence="1">
    <location>
        <begin position="7"/>
        <end position="10"/>
    </location>
    <ligand>
        <name>substrate</name>
    </ligand>
</feature>
<feature type="binding site" evidence="1">
    <location>
        <begin position="60"/>
        <end position="65"/>
    </location>
    <ligand>
        <name>FMN</name>
        <dbReference type="ChEBI" id="CHEBI:58210"/>
    </ligand>
</feature>
<feature type="binding site" evidence="1">
    <location>
        <position position="65"/>
    </location>
    <ligand>
        <name>substrate</name>
    </ligand>
</feature>
<feature type="binding site" evidence="1">
    <location>
        <begin position="75"/>
        <end position="76"/>
    </location>
    <ligand>
        <name>FMN</name>
        <dbReference type="ChEBI" id="CHEBI:58210"/>
    </ligand>
</feature>
<feature type="binding site" evidence="1">
    <location>
        <position position="81"/>
    </location>
    <ligand>
        <name>FMN</name>
        <dbReference type="ChEBI" id="CHEBI:58210"/>
    </ligand>
</feature>
<feature type="binding site" evidence="1">
    <location>
        <position position="82"/>
    </location>
    <ligand>
        <name>FMN</name>
        <dbReference type="ChEBI" id="CHEBI:58210"/>
    </ligand>
</feature>
<feature type="binding site" evidence="1">
    <location>
        <position position="104"/>
    </location>
    <ligand>
        <name>FMN</name>
        <dbReference type="ChEBI" id="CHEBI:58210"/>
    </ligand>
</feature>
<feature type="binding site" evidence="1">
    <location>
        <position position="122"/>
    </location>
    <ligand>
        <name>substrate</name>
    </ligand>
</feature>
<feature type="binding site" evidence="1">
    <location>
        <position position="126"/>
    </location>
    <ligand>
        <name>substrate</name>
    </ligand>
</feature>
<feature type="binding site" evidence="1">
    <location>
        <position position="130"/>
    </location>
    <ligand>
        <name>substrate</name>
    </ligand>
</feature>
<feature type="binding site" evidence="1">
    <location>
        <begin position="139"/>
        <end position="140"/>
    </location>
    <ligand>
        <name>FMN</name>
        <dbReference type="ChEBI" id="CHEBI:58210"/>
    </ligand>
</feature>
<feature type="binding site" evidence="1">
    <location>
        <position position="183"/>
    </location>
    <ligand>
        <name>FMN</name>
        <dbReference type="ChEBI" id="CHEBI:58210"/>
    </ligand>
</feature>
<feature type="binding site" evidence="1">
    <location>
        <begin position="189"/>
        <end position="191"/>
    </location>
    <ligand>
        <name>substrate</name>
    </ligand>
</feature>
<feature type="binding site" evidence="1">
    <location>
        <position position="193"/>
    </location>
    <ligand>
        <name>FMN</name>
        <dbReference type="ChEBI" id="CHEBI:58210"/>
    </ligand>
</feature>
<sequence length="210" mass="24124">MELHDIREDYTKRELSEKHCAADPIKQFEKWLKEAIWAKVNEPTAMNIATVGENGKPTSRVVLLKEVNAQGFVFFTNYLSRKGKSLAANPFAALNFFWPELERQVRVEGHVVKLDEIKSDEYFASRPYTSRVGAWASEQSAVISGKNVLLAKAALVAAQHPLNVPRPPHWGGYIVEPDTIEFWQGRPSRLHDRIRYRLENQIWVKERLSP</sequence>
<organism>
    <name type="scientific">Actinobacillus succinogenes (strain ATCC 55618 / DSM 22257 / CCUG 43843 / 130Z)</name>
    <dbReference type="NCBI Taxonomy" id="339671"/>
    <lineage>
        <taxon>Bacteria</taxon>
        <taxon>Pseudomonadati</taxon>
        <taxon>Pseudomonadota</taxon>
        <taxon>Gammaproteobacteria</taxon>
        <taxon>Pasteurellales</taxon>
        <taxon>Pasteurellaceae</taxon>
        <taxon>Actinobacillus</taxon>
    </lineage>
</organism>
<dbReference type="EC" id="1.4.3.5" evidence="1"/>
<dbReference type="EMBL" id="CP000746">
    <property type="protein sequence ID" value="ABR73626.1"/>
    <property type="molecule type" value="Genomic_DNA"/>
</dbReference>
<dbReference type="RefSeq" id="WP_011978902.1">
    <property type="nucleotide sequence ID" value="NC_009655.1"/>
</dbReference>
<dbReference type="SMR" id="A6VKX9"/>
<dbReference type="STRING" id="339671.Asuc_0247"/>
<dbReference type="KEGG" id="asu:Asuc_0247"/>
<dbReference type="eggNOG" id="COG0259">
    <property type="taxonomic scope" value="Bacteria"/>
</dbReference>
<dbReference type="HOGENOM" id="CLU_032263_2_2_6"/>
<dbReference type="OrthoDB" id="9780392at2"/>
<dbReference type="UniPathway" id="UPA01068">
    <property type="reaction ID" value="UER00304"/>
</dbReference>
<dbReference type="UniPathway" id="UPA01068">
    <property type="reaction ID" value="UER00305"/>
</dbReference>
<dbReference type="Proteomes" id="UP000001114">
    <property type="component" value="Chromosome"/>
</dbReference>
<dbReference type="GO" id="GO:0010181">
    <property type="term" value="F:FMN binding"/>
    <property type="evidence" value="ECO:0007669"/>
    <property type="project" value="UniProtKB-UniRule"/>
</dbReference>
<dbReference type="GO" id="GO:0004733">
    <property type="term" value="F:pyridoxamine phosphate oxidase activity"/>
    <property type="evidence" value="ECO:0007669"/>
    <property type="project" value="UniProtKB-UniRule"/>
</dbReference>
<dbReference type="GO" id="GO:0008615">
    <property type="term" value="P:pyridoxine biosynthetic process"/>
    <property type="evidence" value="ECO:0007669"/>
    <property type="project" value="UniProtKB-KW"/>
</dbReference>
<dbReference type="FunFam" id="2.30.110.10:FF:000014">
    <property type="entry name" value="Pyridoxine/pyridoxamine 5'-phosphate oxidase"/>
    <property type="match status" value="1"/>
</dbReference>
<dbReference type="Gene3D" id="2.30.110.10">
    <property type="entry name" value="Electron Transport, Fmn-binding Protein, Chain A"/>
    <property type="match status" value="1"/>
</dbReference>
<dbReference type="HAMAP" id="MF_01629">
    <property type="entry name" value="PdxH"/>
    <property type="match status" value="1"/>
</dbReference>
<dbReference type="InterPro" id="IPR000659">
    <property type="entry name" value="Pyridox_Oxase"/>
</dbReference>
<dbReference type="InterPro" id="IPR019740">
    <property type="entry name" value="Pyridox_Oxase_CS"/>
</dbReference>
<dbReference type="InterPro" id="IPR011576">
    <property type="entry name" value="Pyridox_Oxase_N"/>
</dbReference>
<dbReference type="InterPro" id="IPR019576">
    <property type="entry name" value="Pyridoxamine_oxidase_dimer_C"/>
</dbReference>
<dbReference type="InterPro" id="IPR012349">
    <property type="entry name" value="Split_barrel_FMN-bd"/>
</dbReference>
<dbReference type="NCBIfam" id="TIGR00558">
    <property type="entry name" value="pdxH"/>
    <property type="match status" value="1"/>
</dbReference>
<dbReference type="NCBIfam" id="NF004231">
    <property type="entry name" value="PRK05679.1"/>
    <property type="match status" value="1"/>
</dbReference>
<dbReference type="PANTHER" id="PTHR10851:SF0">
    <property type="entry name" value="PYRIDOXINE-5'-PHOSPHATE OXIDASE"/>
    <property type="match status" value="1"/>
</dbReference>
<dbReference type="PANTHER" id="PTHR10851">
    <property type="entry name" value="PYRIDOXINE-5-PHOSPHATE OXIDASE"/>
    <property type="match status" value="1"/>
</dbReference>
<dbReference type="Pfam" id="PF10590">
    <property type="entry name" value="PNP_phzG_C"/>
    <property type="match status" value="1"/>
</dbReference>
<dbReference type="Pfam" id="PF01243">
    <property type="entry name" value="PNPOx_N"/>
    <property type="match status" value="1"/>
</dbReference>
<dbReference type="PIRSF" id="PIRSF000190">
    <property type="entry name" value="Pyd_amn-ph_oxd"/>
    <property type="match status" value="1"/>
</dbReference>
<dbReference type="SUPFAM" id="SSF50475">
    <property type="entry name" value="FMN-binding split barrel"/>
    <property type="match status" value="1"/>
</dbReference>
<dbReference type="PROSITE" id="PS01064">
    <property type="entry name" value="PYRIDOX_OXIDASE"/>
    <property type="match status" value="1"/>
</dbReference>
<evidence type="ECO:0000255" key="1">
    <source>
        <dbReference type="HAMAP-Rule" id="MF_01629"/>
    </source>
</evidence>
<comment type="function">
    <text evidence="1">Catalyzes the oxidation of either pyridoxine 5'-phosphate (PNP) or pyridoxamine 5'-phosphate (PMP) into pyridoxal 5'-phosphate (PLP).</text>
</comment>
<comment type="catalytic activity">
    <reaction evidence="1">
        <text>pyridoxamine 5'-phosphate + O2 + H2O = pyridoxal 5'-phosphate + H2O2 + NH4(+)</text>
        <dbReference type="Rhea" id="RHEA:15817"/>
        <dbReference type="ChEBI" id="CHEBI:15377"/>
        <dbReference type="ChEBI" id="CHEBI:15379"/>
        <dbReference type="ChEBI" id="CHEBI:16240"/>
        <dbReference type="ChEBI" id="CHEBI:28938"/>
        <dbReference type="ChEBI" id="CHEBI:58451"/>
        <dbReference type="ChEBI" id="CHEBI:597326"/>
        <dbReference type="EC" id="1.4.3.5"/>
    </reaction>
</comment>
<comment type="catalytic activity">
    <reaction evidence="1">
        <text>pyridoxine 5'-phosphate + O2 = pyridoxal 5'-phosphate + H2O2</text>
        <dbReference type="Rhea" id="RHEA:15149"/>
        <dbReference type="ChEBI" id="CHEBI:15379"/>
        <dbReference type="ChEBI" id="CHEBI:16240"/>
        <dbReference type="ChEBI" id="CHEBI:58589"/>
        <dbReference type="ChEBI" id="CHEBI:597326"/>
        <dbReference type="EC" id="1.4.3.5"/>
    </reaction>
</comment>
<comment type="cofactor">
    <cofactor evidence="1">
        <name>FMN</name>
        <dbReference type="ChEBI" id="CHEBI:58210"/>
    </cofactor>
    <text evidence="1">Binds 1 FMN per subunit.</text>
</comment>
<comment type="pathway">
    <text evidence="1">Cofactor metabolism; pyridoxal 5'-phosphate salvage; pyridoxal 5'-phosphate from pyridoxamine 5'-phosphate: step 1/1.</text>
</comment>
<comment type="pathway">
    <text evidence="1">Cofactor metabolism; pyridoxal 5'-phosphate salvage; pyridoxal 5'-phosphate from pyridoxine 5'-phosphate: step 1/1.</text>
</comment>
<comment type="subunit">
    <text evidence="1">Homodimer.</text>
</comment>
<comment type="similarity">
    <text evidence="1">Belongs to the pyridoxamine 5'-phosphate oxidase family.</text>
</comment>
<accession>A6VKX9</accession>
<reference key="1">
    <citation type="journal article" date="2010" name="BMC Genomics">
        <title>A genomic perspective on the potential of Actinobacillus succinogenes for industrial succinate production.</title>
        <authorList>
            <person name="McKinlay J.B."/>
            <person name="Laivenieks M."/>
            <person name="Schindler B.D."/>
            <person name="McKinlay A.A."/>
            <person name="Siddaramappa S."/>
            <person name="Challacombe J.F."/>
            <person name="Lowry S.R."/>
            <person name="Clum A."/>
            <person name="Lapidus A.L."/>
            <person name="Burkhart K.B."/>
            <person name="Harkins V."/>
            <person name="Vieille C."/>
        </authorList>
    </citation>
    <scope>NUCLEOTIDE SEQUENCE [LARGE SCALE GENOMIC DNA]</scope>
    <source>
        <strain>ATCC 55618 / DSM 22257 / CCUG 43843 / 130Z</strain>
    </source>
</reference>
<protein>
    <recommendedName>
        <fullName evidence="1">Pyridoxine/pyridoxamine 5'-phosphate oxidase</fullName>
        <ecNumber evidence="1">1.4.3.5</ecNumber>
    </recommendedName>
    <alternativeName>
        <fullName evidence="1">PNP/PMP oxidase</fullName>
        <shortName evidence="1">PNPOx</shortName>
    </alternativeName>
    <alternativeName>
        <fullName evidence="1">Pyridoxal 5'-phosphate synthase</fullName>
    </alternativeName>
</protein>
<name>PDXH_ACTSZ</name>